<organism>
    <name type="scientific">Chlamydia pneumoniae</name>
    <name type="common">Chlamydophila pneumoniae</name>
    <dbReference type="NCBI Taxonomy" id="83558"/>
    <lineage>
        <taxon>Bacteria</taxon>
        <taxon>Pseudomonadati</taxon>
        <taxon>Chlamydiota</taxon>
        <taxon>Chlamydiia</taxon>
        <taxon>Chlamydiales</taxon>
        <taxon>Chlamydiaceae</taxon>
        <taxon>Chlamydia/Chlamydophila group</taxon>
        <taxon>Chlamydia</taxon>
    </lineage>
</organism>
<gene>
    <name type="primary">parB</name>
    <name type="ordered locus">CPn_0684</name>
    <name type="ordered locus">CP_0062</name>
    <name type="ordered locus">CpB0711</name>
</gene>
<keyword id="KW-0159">Chromosome partition</keyword>
<keyword id="KW-0238">DNA-binding</keyword>
<name>PARB_CHLPN</name>
<feature type="chain" id="PRO_0000178678" description="Probable chromosome-partitioning protein ParB">
    <location>
        <begin position="1"/>
        <end position="286"/>
    </location>
</feature>
<proteinExistence type="inferred from homology"/>
<protein>
    <recommendedName>
        <fullName>Probable chromosome-partitioning protein ParB</fullName>
    </recommendedName>
</protein>
<dbReference type="EMBL" id="AE001363">
    <property type="protein sequence ID" value="AAD18823.1"/>
    <property type="molecule type" value="Genomic_DNA"/>
</dbReference>
<dbReference type="EMBL" id="AE002161">
    <property type="protein sequence ID" value="AAF37951.1"/>
    <property type="molecule type" value="Genomic_DNA"/>
</dbReference>
<dbReference type="EMBL" id="BA000008">
    <property type="protein sequence ID" value="BAA98891.1"/>
    <property type="molecule type" value="Genomic_DNA"/>
</dbReference>
<dbReference type="EMBL" id="AE009440">
    <property type="protein sequence ID" value="AAP98641.1"/>
    <property type="molecule type" value="Genomic_DNA"/>
</dbReference>
<dbReference type="PIR" id="A86576">
    <property type="entry name" value="A86576"/>
</dbReference>
<dbReference type="PIR" id="B72047">
    <property type="entry name" value="B72047"/>
</dbReference>
<dbReference type="RefSeq" id="NP_224880.1">
    <property type="nucleotide sequence ID" value="NC_000922.1"/>
</dbReference>
<dbReference type="RefSeq" id="WP_010883322.1">
    <property type="nucleotide sequence ID" value="NZ_LN847257.1"/>
</dbReference>
<dbReference type="SMR" id="Q9Z7M0"/>
<dbReference type="STRING" id="406984.CPK_ORF00085"/>
<dbReference type="GeneID" id="45050736"/>
<dbReference type="KEGG" id="cpa:CP_0062"/>
<dbReference type="KEGG" id="cpj:parB"/>
<dbReference type="KEGG" id="cpn:CPn_0684"/>
<dbReference type="KEGG" id="cpt:CpB0711"/>
<dbReference type="PATRIC" id="fig|115713.3.peg.756"/>
<dbReference type="eggNOG" id="COG1475">
    <property type="taxonomic scope" value="Bacteria"/>
</dbReference>
<dbReference type="HOGENOM" id="CLU_023853_0_0_0"/>
<dbReference type="OMA" id="YQFTIRI"/>
<dbReference type="OrthoDB" id="9802051at2"/>
<dbReference type="Proteomes" id="UP000000583">
    <property type="component" value="Chromosome"/>
</dbReference>
<dbReference type="Proteomes" id="UP000000801">
    <property type="component" value="Chromosome"/>
</dbReference>
<dbReference type="GO" id="GO:0005694">
    <property type="term" value="C:chromosome"/>
    <property type="evidence" value="ECO:0007669"/>
    <property type="project" value="TreeGrafter"/>
</dbReference>
<dbReference type="GO" id="GO:0003677">
    <property type="term" value="F:DNA binding"/>
    <property type="evidence" value="ECO:0007669"/>
    <property type="project" value="UniProtKB-KW"/>
</dbReference>
<dbReference type="GO" id="GO:0007059">
    <property type="term" value="P:chromosome segregation"/>
    <property type="evidence" value="ECO:0007669"/>
    <property type="project" value="UniProtKB-KW"/>
</dbReference>
<dbReference type="GO" id="GO:0045881">
    <property type="term" value="P:positive regulation of sporulation resulting in formation of a cellular spore"/>
    <property type="evidence" value="ECO:0007669"/>
    <property type="project" value="TreeGrafter"/>
</dbReference>
<dbReference type="CDD" id="cd16393">
    <property type="entry name" value="SPO0J_N"/>
    <property type="match status" value="1"/>
</dbReference>
<dbReference type="FunFam" id="1.10.10.2830:FF:000001">
    <property type="entry name" value="Chromosome partitioning protein ParB"/>
    <property type="match status" value="1"/>
</dbReference>
<dbReference type="FunFam" id="3.90.1530.30:FF:000001">
    <property type="entry name" value="Chromosome partitioning protein ParB"/>
    <property type="match status" value="1"/>
</dbReference>
<dbReference type="Gene3D" id="1.10.10.2830">
    <property type="match status" value="1"/>
</dbReference>
<dbReference type="Gene3D" id="3.90.1530.30">
    <property type="match status" value="1"/>
</dbReference>
<dbReference type="InterPro" id="IPR050336">
    <property type="entry name" value="Chromosome_partition/occlusion"/>
</dbReference>
<dbReference type="InterPro" id="IPR041468">
    <property type="entry name" value="HTH_ParB/Spo0J"/>
</dbReference>
<dbReference type="InterPro" id="IPR004437">
    <property type="entry name" value="ParB/RepB/Spo0J"/>
</dbReference>
<dbReference type="InterPro" id="IPR003115">
    <property type="entry name" value="ParB/Sulfiredoxin_dom"/>
</dbReference>
<dbReference type="InterPro" id="IPR036086">
    <property type="entry name" value="ParB/Sulfiredoxin_sf"/>
</dbReference>
<dbReference type="NCBIfam" id="TIGR00180">
    <property type="entry name" value="parB_part"/>
    <property type="match status" value="1"/>
</dbReference>
<dbReference type="PANTHER" id="PTHR33375">
    <property type="entry name" value="CHROMOSOME-PARTITIONING PROTEIN PARB-RELATED"/>
    <property type="match status" value="1"/>
</dbReference>
<dbReference type="PANTHER" id="PTHR33375:SF1">
    <property type="entry name" value="CHROMOSOME-PARTITIONING PROTEIN PARB-RELATED"/>
    <property type="match status" value="1"/>
</dbReference>
<dbReference type="Pfam" id="PF17762">
    <property type="entry name" value="HTH_ParB"/>
    <property type="match status" value="1"/>
</dbReference>
<dbReference type="Pfam" id="PF02195">
    <property type="entry name" value="ParBc"/>
    <property type="match status" value="1"/>
</dbReference>
<dbReference type="SMART" id="SM00470">
    <property type="entry name" value="ParB"/>
    <property type="match status" value="1"/>
</dbReference>
<dbReference type="SUPFAM" id="SSF110849">
    <property type="entry name" value="ParB/Sulfiredoxin"/>
    <property type="match status" value="1"/>
</dbReference>
<reference key="1">
    <citation type="journal article" date="1999" name="Nat. Genet.">
        <title>Comparative genomes of Chlamydia pneumoniae and C. trachomatis.</title>
        <authorList>
            <person name="Kalman S."/>
            <person name="Mitchell W.P."/>
            <person name="Marathe R."/>
            <person name="Lammel C.J."/>
            <person name="Fan J."/>
            <person name="Hyman R.W."/>
            <person name="Olinger L."/>
            <person name="Grimwood J."/>
            <person name="Davis R.W."/>
            <person name="Stephens R.S."/>
        </authorList>
    </citation>
    <scope>NUCLEOTIDE SEQUENCE [LARGE SCALE GENOMIC DNA]</scope>
    <source>
        <strain>CWL029</strain>
    </source>
</reference>
<reference key="2">
    <citation type="journal article" date="2000" name="Nucleic Acids Res.">
        <title>Genome sequences of Chlamydia trachomatis MoPn and Chlamydia pneumoniae AR39.</title>
        <authorList>
            <person name="Read T.D."/>
            <person name="Brunham R.C."/>
            <person name="Shen C."/>
            <person name="Gill S.R."/>
            <person name="Heidelberg J.F."/>
            <person name="White O."/>
            <person name="Hickey E.K."/>
            <person name="Peterson J.D."/>
            <person name="Utterback T.R."/>
            <person name="Berry K.J."/>
            <person name="Bass S."/>
            <person name="Linher K.D."/>
            <person name="Weidman J.F."/>
            <person name="Khouri H.M."/>
            <person name="Craven B."/>
            <person name="Bowman C."/>
            <person name="Dodson R.J."/>
            <person name="Gwinn M.L."/>
            <person name="Nelson W.C."/>
            <person name="DeBoy R.T."/>
            <person name="Kolonay J.F."/>
            <person name="McClarty G."/>
            <person name="Salzberg S.L."/>
            <person name="Eisen J.A."/>
            <person name="Fraser C.M."/>
        </authorList>
    </citation>
    <scope>NUCLEOTIDE SEQUENCE [LARGE SCALE GENOMIC DNA]</scope>
    <source>
        <strain>AR39</strain>
    </source>
</reference>
<reference key="3">
    <citation type="journal article" date="2000" name="Nucleic Acids Res.">
        <title>Comparison of whole genome sequences of Chlamydia pneumoniae J138 from Japan and CWL029 from USA.</title>
        <authorList>
            <person name="Shirai M."/>
            <person name="Hirakawa H."/>
            <person name="Kimoto M."/>
            <person name="Tabuchi M."/>
            <person name="Kishi F."/>
            <person name="Ouchi K."/>
            <person name="Shiba T."/>
            <person name="Ishii K."/>
            <person name="Hattori M."/>
            <person name="Kuhara S."/>
            <person name="Nakazawa T."/>
        </authorList>
    </citation>
    <scope>NUCLEOTIDE SEQUENCE [LARGE SCALE GENOMIC DNA]</scope>
    <source>
        <strain>J138</strain>
    </source>
</reference>
<reference key="4">
    <citation type="submission" date="2002-05" db="EMBL/GenBank/DDBJ databases">
        <title>The genome sequence of Chlamydia pneumoniae TW183 and comparison with other Chlamydia strains based on whole genome sequence analysis.</title>
        <authorList>
            <person name="Geng M.M."/>
            <person name="Schuhmacher A."/>
            <person name="Muehldorfer I."/>
            <person name="Bensch K.W."/>
            <person name="Schaefer K.P."/>
            <person name="Schneider S."/>
            <person name="Pohl T."/>
            <person name="Essig A."/>
            <person name="Marre R."/>
            <person name="Melchers K."/>
        </authorList>
    </citation>
    <scope>NUCLEOTIDE SEQUENCE [LARGE SCALE GENOMIC DNA]</scope>
    <source>
        <strain>TW-183</strain>
    </source>
</reference>
<comment type="function">
    <text evidence="1">Involved in chromosome partition. Localize to both poles of the predivisional cell following completion of DNA replication. Binds to the DNA origin of replication (By similarity).</text>
</comment>
<comment type="similarity">
    <text evidence="2">Belongs to the ParB family.</text>
</comment>
<sequence>MTEEISKDTIIEVAIDDIRVSPFQPRRVFSNEELQELIASIKAVGLIHPPVVREICTGDRVLYYELIAGERRWRAMQLAGATTIPVILKHVIADGTAAEATLIENIQRVNLNPIEMAEAFKRLIHVFGLTQDKVAYKVGKKRSTVANYLRLLALSKTIQESLLQGQITLGHAKVILTLEDPILREKLNEIIIQEHLAVREAELIAKQLISEEGSSIELKPTPLDMAESSKQHEELQQRLSDLCGYKVQIKTRGSKATVSFHLQNTQDLQKLEAWLSSHGTLSESLS</sequence>
<evidence type="ECO:0000250" key="1"/>
<evidence type="ECO:0000305" key="2"/>
<accession>Q9Z7M0</accession>